<feature type="chain" id="PRO_0000247495" description="DnaJ homolog subfamily C member 14">
    <location>
        <begin position="1"/>
        <end position="703"/>
    </location>
</feature>
<feature type="transmembrane region" description="Helical" evidence="1">
    <location>
        <begin position="254"/>
        <end position="274"/>
    </location>
</feature>
<feature type="transmembrane region" description="Helical" evidence="1">
    <location>
        <begin position="305"/>
        <end position="325"/>
    </location>
</feature>
<feature type="transmembrane region" description="Helical" evidence="1">
    <location>
        <begin position="327"/>
        <end position="347"/>
    </location>
</feature>
<feature type="domain" description="J" evidence="2">
    <location>
        <begin position="444"/>
        <end position="508"/>
    </location>
</feature>
<feature type="region of interest" description="Disordered" evidence="3">
    <location>
        <begin position="1"/>
        <end position="150"/>
    </location>
</feature>
<feature type="region of interest" description="Disordered" evidence="3">
    <location>
        <begin position="164"/>
        <end position="229"/>
    </location>
</feature>
<feature type="region of interest" description="Disordered" evidence="3">
    <location>
        <begin position="622"/>
        <end position="643"/>
    </location>
</feature>
<feature type="region of interest" description="Disordered" evidence="3">
    <location>
        <begin position="659"/>
        <end position="703"/>
    </location>
</feature>
<feature type="compositionally biased region" description="Low complexity" evidence="3">
    <location>
        <begin position="17"/>
        <end position="28"/>
    </location>
</feature>
<feature type="compositionally biased region" description="Pro residues" evidence="3">
    <location>
        <begin position="75"/>
        <end position="84"/>
    </location>
</feature>
<feature type="compositionally biased region" description="Acidic residues" evidence="3">
    <location>
        <begin position="89"/>
        <end position="102"/>
    </location>
</feature>
<feature type="compositionally biased region" description="Acidic residues" evidence="3">
    <location>
        <begin position="164"/>
        <end position="176"/>
    </location>
</feature>
<feature type="compositionally biased region" description="Basic residues" evidence="3">
    <location>
        <begin position="193"/>
        <end position="202"/>
    </location>
</feature>
<feature type="compositionally biased region" description="Basic and acidic residues" evidence="3">
    <location>
        <begin position="203"/>
        <end position="218"/>
    </location>
</feature>
<feature type="compositionally biased region" description="Basic residues" evidence="3">
    <location>
        <begin position="219"/>
        <end position="228"/>
    </location>
</feature>
<feature type="compositionally biased region" description="Polar residues" evidence="3">
    <location>
        <begin position="673"/>
        <end position="684"/>
    </location>
</feature>
<feature type="compositionally biased region" description="Basic residues" evidence="3">
    <location>
        <begin position="691"/>
        <end position="703"/>
    </location>
</feature>
<feature type="mutagenesis site" description="Loss of interaction with DRD1." evidence="4">
    <original>C</original>
    <variation>S</variation>
    <location>
        <position position="538"/>
    </location>
</feature>
<feature type="sequence conflict" description="In Ref. 1; AAK56240." evidence="5" ref="1">
    <original>P</original>
    <variation>S</variation>
    <location>
        <position position="65"/>
    </location>
</feature>
<feature type="sequence conflict" description="In Ref. 1; AAK56240." evidence="5" ref="1">
    <original>RKRSQTDKRR</original>
    <variation>EVRQITPE</variation>
    <location>
        <begin position="226"/>
        <end position="235"/>
    </location>
</feature>
<feature type="sequence conflict" description="In Ref. 1; AAK56240." evidence="5" ref="1">
    <original>E</original>
    <variation>G</variation>
    <location>
        <position position="244"/>
    </location>
</feature>
<feature type="sequence conflict" description="In Ref. 1; AAK56240." evidence="5" ref="1">
    <original>HVA</original>
    <variation>NVP</variation>
    <location>
        <begin position="416"/>
        <end position="418"/>
    </location>
</feature>
<proteinExistence type="evidence at protein level"/>
<protein>
    <recommendedName>
        <fullName>DnaJ homolog subfamily C member 14</fullName>
    </recommendedName>
    <alternativeName>
        <fullName>Dopamine receptor-interacting protein of 78 kDa</fullName>
        <shortName>DRiP78</shortName>
    </alternativeName>
</protein>
<sequence length="703" mass="79017">MAQKHPGERGLCGVHHSGGSSLITSGSSVDPEILSFSGLRDSKETAPNGTRCLKEHSDPKCTQPPNPAHWSDPSHGPPRGPGPPREGGYPDESETCSEESGVDQELSRENETGYQEDGSPSFLPIPSACNCQGSPGVPEGTCSEEGDGSSSSFCHHCTSPALGEDEELEEEYDDEEPLKFPSDFSRVSSGKKPPSRRQRHRFLTKEDVRDSGRRDPKAPGRHRLARKRSQTDKRRGLGLWGVEELCQLGQAGFWWLIELLVLVGEYVETCGYLIYACRKLKGSDLDLFRIWVGVWARRLGGWARVMFQFLSQSFFSVAGLFIRLLRVVGAFLLLALALFLGCLQLGWRFLVGLGDRLGWRGKAAWLFSWLDSPALHHFLTLLKDSRPWQQLVRVIQWGWLELPWVKQRTQRQGTAHVASGRYCQPEEEVARLLTMAGVPEDELNPFHVLGVEATASDIELKKAYRQLAVMVHPDKNHHPRAEEAFKVLRAAWDIVSNPERRKEYEMKRMAENELSRSVNEFLSKLQDDLKEAMNTMMCSRCQGKHRRFEMDREPKSARYCAECNRLHPAEEGDFWAESSMLGLKITYFALMDGKVYDITEWAGCQRVGISPDTHRVPYHISFGSRVPGTSGRQRATPESPPADLQDFLSRIFQVPPGPMSNGNFFAAPHPGPGTTSTSRPNSSVPKGEAKPKRRKKVRRPFQR</sequence>
<comment type="function">
    <text evidence="4">Regulates the export of target proteins, such as DRD1, from the endoplasmic reticulum to the cell surface.</text>
</comment>
<comment type="subunit">
    <text evidence="4">Interacts with the FxxxFxxxF motif of DRD1 via its C-terminal domain.</text>
</comment>
<comment type="subcellular location">
    <subcellularLocation>
        <location evidence="4">Endoplasmic reticulum membrane</location>
        <topology evidence="4">Multi-pass membrane protein</topology>
    </subcellularLocation>
</comment>
<comment type="tissue specificity">
    <text evidence="4">Detected in heart, brain, lung, liver, skeletal muscle, kidney and testis.</text>
</comment>
<evidence type="ECO:0000255" key="1"/>
<evidence type="ECO:0000255" key="2">
    <source>
        <dbReference type="PROSITE-ProRule" id="PRU00286"/>
    </source>
</evidence>
<evidence type="ECO:0000256" key="3">
    <source>
        <dbReference type="SAM" id="MobiDB-lite"/>
    </source>
</evidence>
<evidence type="ECO:0000269" key="4">
    <source>
    </source>
</evidence>
<evidence type="ECO:0000305" key="5"/>
<dbReference type="EMBL" id="AF351783">
    <property type="protein sequence ID" value="AAK56240.1"/>
    <property type="molecule type" value="mRNA"/>
</dbReference>
<dbReference type="EMBL" id="BC083549">
    <property type="protein sequence ID" value="AAH83549.1"/>
    <property type="molecule type" value="mRNA"/>
</dbReference>
<dbReference type="RefSeq" id="NP_446142.2">
    <property type="nucleotide sequence ID" value="NM_053690.2"/>
</dbReference>
<dbReference type="RefSeq" id="XP_006240788.1">
    <property type="nucleotide sequence ID" value="XM_006240726.3"/>
</dbReference>
<dbReference type="RefSeq" id="XP_006240789.1">
    <property type="nucleotide sequence ID" value="XM_006240727.4"/>
</dbReference>
<dbReference type="RefSeq" id="XP_008763233.1">
    <property type="nucleotide sequence ID" value="XM_008765011.4"/>
</dbReference>
<dbReference type="RefSeq" id="XP_017450056.1">
    <property type="nucleotide sequence ID" value="XM_017594567.3"/>
</dbReference>
<dbReference type="SMR" id="Q5XIX0"/>
<dbReference type="FunCoup" id="Q5XIX0">
    <property type="interactions" value="2851"/>
</dbReference>
<dbReference type="STRING" id="10116.ENSRNOP00000029946"/>
<dbReference type="iPTMnet" id="Q5XIX0"/>
<dbReference type="PhosphoSitePlus" id="Q5XIX0"/>
<dbReference type="PaxDb" id="10116-ENSRNOP00000029946"/>
<dbReference type="Ensembl" id="ENSRNOT00000037332.4">
    <property type="protein sequence ID" value="ENSRNOP00000029946.3"/>
    <property type="gene ID" value="ENSRNOG00000006844.5"/>
</dbReference>
<dbReference type="GeneID" id="114481"/>
<dbReference type="KEGG" id="rno:114481"/>
<dbReference type="UCSC" id="RGD:620489">
    <property type="organism name" value="rat"/>
</dbReference>
<dbReference type="AGR" id="RGD:620489"/>
<dbReference type="CTD" id="85406"/>
<dbReference type="RGD" id="620489">
    <property type="gene designation" value="Dnajc14"/>
</dbReference>
<dbReference type="eggNOG" id="KOG0720">
    <property type="taxonomic scope" value="Eukaryota"/>
</dbReference>
<dbReference type="GeneTree" id="ENSGT00940000155637"/>
<dbReference type="HOGENOM" id="CLU_020746_0_0_1"/>
<dbReference type="InParanoid" id="Q5XIX0"/>
<dbReference type="OMA" id="WLELPWF"/>
<dbReference type="OrthoDB" id="1507364at2759"/>
<dbReference type="PhylomeDB" id="Q5XIX0"/>
<dbReference type="TreeFam" id="TF105173"/>
<dbReference type="PRO" id="PR:Q5XIX0"/>
<dbReference type="Proteomes" id="UP000002494">
    <property type="component" value="Chromosome 7"/>
</dbReference>
<dbReference type="Bgee" id="ENSRNOG00000006844">
    <property type="expression patterns" value="Expressed in lung and 20 other cell types or tissues"/>
</dbReference>
<dbReference type="GO" id="GO:0005789">
    <property type="term" value="C:endoplasmic reticulum membrane"/>
    <property type="evidence" value="ECO:0007669"/>
    <property type="project" value="UniProtKB-SubCell"/>
</dbReference>
<dbReference type="GO" id="GO:0050780">
    <property type="term" value="F:dopamine receptor binding"/>
    <property type="evidence" value="ECO:0000314"/>
    <property type="project" value="RGD"/>
</dbReference>
<dbReference type="GO" id="GO:0001664">
    <property type="term" value="F:G protein-coupled receptor binding"/>
    <property type="evidence" value="ECO:0000314"/>
    <property type="project" value="RGD"/>
</dbReference>
<dbReference type="GO" id="GO:0015031">
    <property type="term" value="P:protein transport"/>
    <property type="evidence" value="ECO:0007669"/>
    <property type="project" value="UniProtKB-KW"/>
</dbReference>
<dbReference type="CDD" id="cd06257">
    <property type="entry name" value="DnaJ"/>
    <property type="match status" value="1"/>
</dbReference>
<dbReference type="FunFam" id="1.10.287.110:FF:000057">
    <property type="entry name" value="dnaJ homolog subfamily C member 14"/>
    <property type="match status" value="1"/>
</dbReference>
<dbReference type="Gene3D" id="1.10.287.110">
    <property type="entry name" value="DnaJ domain"/>
    <property type="match status" value="1"/>
</dbReference>
<dbReference type="InterPro" id="IPR001623">
    <property type="entry name" value="DnaJ_domain"/>
</dbReference>
<dbReference type="InterPro" id="IPR036869">
    <property type="entry name" value="J_dom_sf"/>
</dbReference>
<dbReference type="InterPro" id="IPR032843">
    <property type="entry name" value="Jiv"/>
</dbReference>
<dbReference type="InterPro" id="IPR052317">
    <property type="entry name" value="Viral_replicn-host_int_reg"/>
</dbReference>
<dbReference type="PANTHER" id="PTHR44665">
    <property type="entry name" value="DNAJ HOMOLOG SUBFAMILY C MEMBER 14"/>
    <property type="match status" value="1"/>
</dbReference>
<dbReference type="PANTHER" id="PTHR44665:SF1">
    <property type="entry name" value="DNAJ HOMOLOG SUBFAMILY C MEMBER 14"/>
    <property type="match status" value="1"/>
</dbReference>
<dbReference type="Pfam" id="PF00226">
    <property type="entry name" value="DnaJ"/>
    <property type="match status" value="1"/>
</dbReference>
<dbReference type="Pfam" id="PF14901">
    <property type="entry name" value="Jiv90"/>
    <property type="match status" value="1"/>
</dbReference>
<dbReference type="PRINTS" id="PR00625">
    <property type="entry name" value="JDOMAIN"/>
</dbReference>
<dbReference type="SMART" id="SM00271">
    <property type="entry name" value="DnaJ"/>
    <property type="match status" value="1"/>
</dbReference>
<dbReference type="SUPFAM" id="SSF46565">
    <property type="entry name" value="Chaperone J-domain"/>
    <property type="match status" value="1"/>
</dbReference>
<dbReference type="PROSITE" id="PS50076">
    <property type="entry name" value="DNAJ_2"/>
    <property type="match status" value="1"/>
</dbReference>
<accession>Q5XIX0</accession>
<accession>Q925G7</accession>
<reference key="1">
    <citation type="journal article" date="2001" name="Nat. Cell Biol.">
        <title>Regulation of transport of the dopamine D1 receptor by a new membrane-associated ER protein.</title>
        <authorList>
            <person name="Bermak J.C."/>
            <person name="Li M."/>
            <person name="Bullock C.M."/>
            <person name="Zhou Q.-Y."/>
        </authorList>
    </citation>
    <scope>NUCLEOTIDE SEQUENCE [MRNA]</scope>
    <scope>FUNCTION</scope>
    <scope>INTERACTION WITH DRD1</scope>
    <scope>MUTAGENESIS OF CYS-538</scope>
    <scope>SUBCELLULAR LOCATION</scope>
    <scope>TISSUE SPECIFICITY</scope>
    <source>
        <strain>Sprague-Dawley</strain>
        <tissue>Brain</tissue>
    </source>
</reference>
<reference key="2">
    <citation type="journal article" date="2004" name="Genome Res.">
        <title>The status, quality, and expansion of the NIH full-length cDNA project: the Mammalian Gene Collection (MGC).</title>
        <authorList>
            <consortium name="The MGC Project Team"/>
        </authorList>
    </citation>
    <scope>NUCLEOTIDE SEQUENCE [LARGE SCALE MRNA]</scope>
    <source>
        <tissue>Kidney</tissue>
    </source>
</reference>
<organism>
    <name type="scientific">Rattus norvegicus</name>
    <name type="common">Rat</name>
    <dbReference type="NCBI Taxonomy" id="10116"/>
    <lineage>
        <taxon>Eukaryota</taxon>
        <taxon>Metazoa</taxon>
        <taxon>Chordata</taxon>
        <taxon>Craniata</taxon>
        <taxon>Vertebrata</taxon>
        <taxon>Euteleostomi</taxon>
        <taxon>Mammalia</taxon>
        <taxon>Eutheria</taxon>
        <taxon>Euarchontoglires</taxon>
        <taxon>Glires</taxon>
        <taxon>Rodentia</taxon>
        <taxon>Myomorpha</taxon>
        <taxon>Muroidea</taxon>
        <taxon>Muridae</taxon>
        <taxon>Murinae</taxon>
        <taxon>Rattus</taxon>
    </lineage>
</organism>
<gene>
    <name type="primary">Dnajc14</name>
    <name type="synonym">Drip78</name>
</gene>
<name>DJC14_RAT</name>
<keyword id="KW-0143">Chaperone</keyword>
<keyword id="KW-0256">Endoplasmic reticulum</keyword>
<keyword id="KW-0472">Membrane</keyword>
<keyword id="KW-0653">Protein transport</keyword>
<keyword id="KW-1185">Reference proteome</keyword>
<keyword id="KW-0812">Transmembrane</keyword>
<keyword id="KW-1133">Transmembrane helix</keyword>
<keyword id="KW-0813">Transport</keyword>